<feature type="chain" id="PRO_1000076530" description="Elongation factor P">
    <location>
        <begin position="1"/>
        <end position="188"/>
    </location>
</feature>
<feature type="modified residue" description="N6-(3,6-diaminohexanoyl)-5-hydroxylysine" evidence="1">
    <location>
        <position position="34"/>
    </location>
</feature>
<dbReference type="EMBL" id="CP000880">
    <property type="protein sequence ID" value="ABX23131.1"/>
    <property type="molecule type" value="Genomic_DNA"/>
</dbReference>
<dbReference type="SMR" id="A9MFR5"/>
<dbReference type="STRING" id="41514.SARI_03298"/>
<dbReference type="KEGG" id="ses:SARI_03298"/>
<dbReference type="HOGENOM" id="CLU_074944_0_0_6"/>
<dbReference type="UniPathway" id="UPA00345"/>
<dbReference type="Proteomes" id="UP000002084">
    <property type="component" value="Chromosome"/>
</dbReference>
<dbReference type="GO" id="GO:0005829">
    <property type="term" value="C:cytosol"/>
    <property type="evidence" value="ECO:0007669"/>
    <property type="project" value="UniProtKB-ARBA"/>
</dbReference>
<dbReference type="GO" id="GO:0003746">
    <property type="term" value="F:translation elongation factor activity"/>
    <property type="evidence" value="ECO:0007669"/>
    <property type="project" value="UniProtKB-UniRule"/>
</dbReference>
<dbReference type="GO" id="GO:0043043">
    <property type="term" value="P:peptide biosynthetic process"/>
    <property type="evidence" value="ECO:0007669"/>
    <property type="project" value="InterPro"/>
</dbReference>
<dbReference type="CDD" id="cd04470">
    <property type="entry name" value="S1_EF-P_repeat_1"/>
    <property type="match status" value="1"/>
</dbReference>
<dbReference type="CDD" id="cd05794">
    <property type="entry name" value="S1_EF-P_repeat_2"/>
    <property type="match status" value="1"/>
</dbReference>
<dbReference type="FunFam" id="2.30.30.30:FF:000003">
    <property type="entry name" value="Elongation factor P"/>
    <property type="match status" value="1"/>
</dbReference>
<dbReference type="FunFam" id="2.40.50.140:FF:000004">
    <property type="entry name" value="Elongation factor P"/>
    <property type="match status" value="1"/>
</dbReference>
<dbReference type="FunFam" id="2.40.50.140:FF:000009">
    <property type="entry name" value="Elongation factor P"/>
    <property type="match status" value="1"/>
</dbReference>
<dbReference type="Gene3D" id="2.30.30.30">
    <property type="match status" value="1"/>
</dbReference>
<dbReference type="Gene3D" id="2.40.50.140">
    <property type="entry name" value="Nucleic acid-binding proteins"/>
    <property type="match status" value="2"/>
</dbReference>
<dbReference type="HAMAP" id="MF_00141">
    <property type="entry name" value="EF_P"/>
    <property type="match status" value="1"/>
</dbReference>
<dbReference type="InterPro" id="IPR015365">
    <property type="entry name" value="Elong-fact-P_C"/>
</dbReference>
<dbReference type="InterPro" id="IPR012340">
    <property type="entry name" value="NA-bd_OB-fold"/>
</dbReference>
<dbReference type="InterPro" id="IPR014722">
    <property type="entry name" value="Rib_uL2_dom2"/>
</dbReference>
<dbReference type="InterPro" id="IPR020599">
    <property type="entry name" value="Transl_elong_fac_P/YeiP"/>
</dbReference>
<dbReference type="InterPro" id="IPR013185">
    <property type="entry name" value="Transl_elong_KOW-like"/>
</dbReference>
<dbReference type="InterPro" id="IPR001059">
    <property type="entry name" value="Transl_elong_P/YeiP_cen"/>
</dbReference>
<dbReference type="InterPro" id="IPR013852">
    <property type="entry name" value="Transl_elong_P/YeiP_CS"/>
</dbReference>
<dbReference type="InterPro" id="IPR011768">
    <property type="entry name" value="Transl_elongation_fac_P"/>
</dbReference>
<dbReference type="InterPro" id="IPR008991">
    <property type="entry name" value="Translation_prot_SH3-like_sf"/>
</dbReference>
<dbReference type="NCBIfam" id="TIGR00038">
    <property type="entry name" value="efp"/>
    <property type="match status" value="1"/>
</dbReference>
<dbReference type="NCBIfam" id="NF001810">
    <property type="entry name" value="PRK00529.1"/>
    <property type="match status" value="1"/>
</dbReference>
<dbReference type="PANTHER" id="PTHR30053">
    <property type="entry name" value="ELONGATION FACTOR P"/>
    <property type="match status" value="1"/>
</dbReference>
<dbReference type="PANTHER" id="PTHR30053:SF12">
    <property type="entry name" value="ELONGATION FACTOR P (EF-P) FAMILY PROTEIN"/>
    <property type="match status" value="1"/>
</dbReference>
<dbReference type="Pfam" id="PF01132">
    <property type="entry name" value="EFP"/>
    <property type="match status" value="1"/>
</dbReference>
<dbReference type="Pfam" id="PF08207">
    <property type="entry name" value="EFP_N"/>
    <property type="match status" value="1"/>
</dbReference>
<dbReference type="Pfam" id="PF09285">
    <property type="entry name" value="Elong-fact-P_C"/>
    <property type="match status" value="1"/>
</dbReference>
<dbReference type="PIRSF" id="PIRSF005901">
    <property type="entry name" value="EF-P"/>
    <property type="match status" value="1"/>
</dbReference>
<dbReference type="SMART" id="SM01185">
    <property type="entry name" value="EFP"/>
    <property type="match status" value="1"/>
</dbReference>
<dbReference type="SMART" id="SM00841">
    <property type="entry name" value="Elong-fact-P_C"/>
    <property type="match status" value="1"/>
</dbReference>
<dbReference type="SUPFAM" id="SSF50249">
    <property type="entry name" value="Nucleic acid-binding proteins"/>
    <property type="match status" value="2"/>
</dbReference>
<dbReference type="SUPFAM" id="SSF50104">
    <property type="entry name" value="Translation proteins SH3-like domain"/>
    <property type="match status" value="1"/>
</dbReference>
<dbReference type="PROSITE" id="PS01275">
    <property type="entry name" value="EFP"/>
    <property type="match status" value="1"/>
</dbReference>
<keyword id="KW-0963">Cytoplasm</keyword>
<keyword id="KW-0251">Elongation factor</keyword>
<keyword id="KW-0379">Hydroxylation</keyword>
<keyword id="KW-0648">Protein biosynthesis</keyword>
<keyword id="KW-1185">Reference proteome</keyword>
<protein>
    <recommendedName>
        <fullName evidence="1">Elongation factor P</fullName>
        <shortName evidence="1">EF-P</shortName>
    </recommendedName>
</protein>
<reference key="1">
    <citation type="submission" date="2007-11" db="EMBL/GenBank/DDBJ databases">
        <authorList>
            <consortium name="The Salmonella enterica serovar Arizonae Genome Sequencing Project"/>
            <person name="McClelland M."/>
            <person name="Sanderson E.K."/>
            <person name="Porwollik S."/>
            <person name="Spieth J."/>
            <person name="Clifton W.S."/>
            <person name="Fulton R."/>
            <person name="Chunyan W."/>
            <person name="Wollam A."/>
            <person name="Shah N."/>
            <person name="Pepin K."/>
            <person name="Bhonagiri V."/>
            <person name="Nash W."/>
            <person name="Johnson M."/>
            <person name="Thiruvilangam P."/>
            <person name="Wilson R."/>
        </authorList>
    </citation>
    <scope>NUCLEOTIDE SEQUENCE [LARGE SCALE GENOMIC DNA]</scope>
    <source>
        <strain>ATCC BAA-731 / CDC346-86 / RSK2980</strain>
    </source>
</reference>
<name>EFP_SALAR</name>
<evidence type="ECO:0000255" key="1">
    <source>
        <dbReference type="HAMAP-Rule" id="MF_00141"/>
    </source>
</evidence>
<organism>
    <name type="scientific">Salmonella arizonae (strain ATCC BAA-731 / CDC346-86 / RSK2980)</name>
    <dbReference type="NCBI Taxonomy" id="41514"/>
    <lineage>
        <taxon>Bacteria</taxon>
        <taxon>Pseudomonadati</taxon>
        <taxon>Pseudomonadota</taxon>
        <taxon>Gammaproteobacteria</taxon>
        <taxon>Enterobacterales</taxon>
        <taxon>Enterobacteriaceae</taxon>
        <taxon>Salmonella</taxon>
    </lineage>
</organism>
<sequence>MATYYSNDFRSGLKIMLDGEPYAVESSEFVKPGKGQAFARVKLRRLLTGTRVEKTFKSTDSAEGADVVDMNLTYLYNDGEFWHFMNNETFEQLSADAKAIGDNAKWLLDQAECIVTLWNGQPISVTPPNFVELEIVDTDPGLKGDTAGTGGKPATLSTGAVVKVPLFVQIGEVIKVDTRSGEYVSRVK</sequence>
<gene>
    <name evidence="1" type="primary">efp</name>
    <name type="ordered locus">SARI_03298</name>
</gene>
<accession>A9MFR5</accession>
<comment type="function">
    <text evidence="1">Involved in peptide bond synthesis. Alleviates ribosome stalling that occurs when 3 or more consecutive Pro residues or the sequence PPG is present in a protein, possibly by augmenting the peptidyl transferase activity of the ribosome. Modification of Lys-34 is required for alleviation.</text>
</comment>
<comment type="pathway">
    <text evidence="1">Protein biosynthesis; polypeptide chain elongation.</text>
</comment>
<comment type="subcellular location">
    <subcellularLocation>
        <location evidence="1">Cytoplasm</location>
    </subcellularLocation>
</comment>
<comment type="PTM">
    <text evidence="1">Is beta-lysylated on the epsilon-amino group of Lys-34 by the combined action of EpmA and EpmB, and then hydroxylated on the C5 position of the same residue by EpmC. Lysylation is critical for the stimulatory effect of EF-P on peptide-bond formation. The lysylation moiety would extend toward the peptidyltransferase center and stabilize the terminal 3-CCA end of the tRNA. The hydroxylation of the C5 position on Lys-34 would allow additional potential stabilizing hydrogen-bond interactions with the P-tRNA.</text>
</comment>
<comment type="similarity">
    <text evidence="1">Belongs to the elongation factor P family.</text>
</comment>
<proteinExistence type="inferred from homology"/>